<accession>P52584</accession>
<organism>
    <name type="scientific">Orf virus (strain NZ2)</name>
    <name type="common">OV NZ-2</name>
    <dbReference type="NCBI Taxonomy" id="10259"/>
    <lineage>
        <taxon>Viruses</taxon>
        <taxon>Varidnaviria</taxon>
        <taxon>Bamfordvirae</taxon>
        <taxon>Nucleocytoviricota</taxon>
        <taxon>Pokkesviricetes</taxon>
        <taxon>Chitovirales</taxon>
        <taxon>Poxviridae</taxon>
        <taxon>Chordopoxvirinae</taxon>
        <taxon>Parapoxvirus</taxon>
        <taxon>Orf virus</taxon>
    </lineage>
</organism>
<comment type="function">
    <text>Induces endothelial proliferation.</text>
</comment>
<comment type="subunit">
    <text evidence="1">Homodimer; disulfide-linked.</text>
</comment>
<comment type="subcellular location">
    <subcellularLocation>
        <location evidence="3">Secreted</location>
    </subcellularLocation>
</comment>
<comment type="similarity">
    <text evidence="3">Belongs to the PDGF/VEGF growth factor family.</text>
</comment>
<feature type="signal peptide" evidence="2">
    <location>
        <begin position="1"/>
        <end position="20"/>
    </location>
</feature>
<feature type="chain" id="PRO_0000023417" description="Vascular endothelial growth factor homolog">
    <location>
        <begin position="21"/>
        <end position="133"/>
    </location>
</feature>
<feature type="glycosylation site" description="N-linked (GlcNAc...) asparagine; by host" evidence="2">
    <location>
        <position position="85"/>
    </location>
</feature>
<feature type="disulfide bond" evidence="1">
    <location>
        <begin position="36"/>
        <end position="78"/>
    </location>
</feature>
<feature type="disulfide bond" description="Interchain" evidence="1">
    <location>
        <position position="61"/>
    </location>
</feature>
<feature type="disulfide bond" evidence="1">
    <location>
        <begin position="67"/>
        <end position="112"/>
    </location>
</feature>
<feature type="disulfide bond" description="Interchain" evidence="1">
    <location>
        <position position="70"/>
    </location>
</feature>
<feature type="disulfide bond" evidence="1">
    <location>
        <begin position="71"/>
        <end position="114"/>
    </location>
</feature>
<feature type="helix" evidence="4">
    <location>
        <begin position="27"/>
        <end position="34"/>
    </location>
</feature>
<feature type="strand" evidence="4">
    <location>
        <begin position="35"/>
        <end position="44"/>
    </location>
</feature>
<feature type="helix" evidence="4">
    <location>
        <begin position="45"/>
        <end position="47"/>
    </location>
</feature>
<feature type="strand" evidence="4">
    <location>
        <begin position="58"/>
        <end position="69"/>
    </location>
</feature>
<feature type="strand" evidence="4">
    <location>
        <begin position="71"/>
        <end position="73"/>
    </location>
</feature>
<feature type="strand" evidence="4">
    <location>
        <begin position="76"/>
        <end position="91"/>
    </location>
</feature>
<feature type="strand" evidence="4">
    <location>
        <begin position="97"/>
        <end position="99"/>
    </location>
</feature>
<feature type="strand" evidence="4">
    <location>
        <begin position="101"/>
        <end position="116"/>
    </location>
</feature>
<gene>
    <name type="ORF">A2R</name>
</gene>
<dbReference type="EMBL" id="S67520">
    <property type="protein sequence ID" value="AAB29220.2"/>
    <property type="molecule type" value="Genomic_DNA"/>
</dbReference>
<dbReference type="PIR" id="B49530">
    <property type="entry name" value="B49530"/>
</dbReference>
<dbReference type="PDB" id="2GNN">
    <property type="method" value="X-ray"/>
    <property type="resolution" value="2.30 A"/>
    <property type="chains" value="A/B/C/D=21-133"/>
</dbReference>
<dbReference type="PDB" id="3V6B">
    <property type="method" value="X-ray"/>
    <property type="resolution" value="3.20 A"/>
    <property type="chains" value="A=21-133"/>
</dbReference>
<dbReference type="PDBsum" id="2GNN"/>
<dbReference type="PDBsum" id="3V6B"/>
<dbReference type="SMR" id="P52584"/>
<dbReference type="DIP" id="DIP-29295N"/>
<dbReference type="IntAct" id="P52584">
    <property type="interactions" value="1"/>
</dbReference>
<dbReference type="KEGG" id="ag:AAB29220"/>
<dbReference type="EvolutionaryTrace" id="P52584"/>
<dbReference type="GO" id="GO:0005615">
    <property type="term" value="C:extracellular space"/>
    <property type="evidence" value="ECO:0007669"/>
    <property type="project" value="TreeGrafter"/>
</dbReference>
<dbReference type="GO" id="GO:0016020">
    <property type="term" value="C:membrane"/>
    <property type="evidence" value="ECO:0007669"/>
    <property type="project" value="InterPro"/>
</dbReference>
<dbReference type="GO" id="GO:0042056">
    <property type="term" value="F:chemoattractant activity"/>
    <property type="evidence" value="ECO:0007669"/>
    <property type="project" value="TreeGrafter"/>
</dbReference>
<dbReference type="GO" id="GO:0008083">
    <property type="term" value="F:growth factor activity"/>
    <property type="evidence" value="ECO:0007669"/>
    <property type="project" value="UniProtKB-KW"/>
</dbReference>
<dbReference type="GO" id="GO:0005172">
    <property type="term" value="F:vascular endothelial growth factor receptor binding"/>
    <property type="evidence" value="ECO:0007669"/>
    <property type="project" value="TreeGrafter"/>
</dbReference>
<dbReference type="GO" id="GO:0050930">
    <property type="term" value="P:induction of positive chemotaxis"/>
    <property type="evidence" value="ECO:0007669"/>
    <property type="project" value="TreeGrafter"/>
</dbReference>
<dbReference type="GO" id="GO:0045766">
    <property type="term" value="P:positive regulation of angiogenesis"/>
    <property type="evidence" value="ECO:0007669"/>
    <property type="project" value="TreeGrafter"/>
</dbReference>
<dbReference type="GO" id="GO:0051781">
    <property type="term" value="P:positive regulation of cell division"/>
    <property type="evidence" value="ECO:0007669"/>
    <property type="project" value="UniProtKB-KW"/>
</dbReference>
<dbReference type="GO" id="GO:0001938">
    <property type="term" value="P:positive regulation of endothelial cell proliferation"/>
    <property type="evidence" value="ECO:0007669"/>
    <property type="project" value="TreeGrafter"/>
</dbReference>
<dbReference type="GO" id="GO:0060754">
    <property type="term" value="P:positive regulation of mast cell chemotaxis"/>
    <property type="evidence" value="ECO:0007669"/>
    <property type="project" value="TreeGrafter"/>
</dbReference>
<dbReference type="GO" id="GO:0001666">
    <property type="term" value="P:response to hypoxia"/>
    <property type="evidence" value="ECO:0007669"/>
    <property type="project" value="TreeGrafter"/>
</dbReference>
<dbReference type="CDD" id="cd00135">
    <property type="entry name" value="PDGF"/>
    <property type="match status" value="1"/>
</dbReference>
<dbReference type="Gene3D" id="2.10.90.10">
    <property type="entry name" value="Cystine-knot cytokines"/>
    <property type="match status" value="1"/>
</dbReference>
<dbReference type="InterPro" id="IPR029034">
    <property type="entry name" value="Cystine-knot_cytokine"/>
</dbReference>
<dbReference type="InterPro" id="IPR023581">
    <property type="entry name" value="PD_growth_factor_CS"/>
</dbReference>
<dbReference type="InterPro" id="IPR000072">
    <property type="entry name" value="PDGF/VEGF_dom"/>
</dbReference>
<dbReference type="InterPro" id="IPR050507">
    <property type="entry name" value="PDGF/VEGF_growth_factor"/>
</dbReference>
<dbReference type="PANTHER" id="PTHR12025">
    <property type="entry name" value="VASCULAR ENDOTHELIAL GROWTH FACTOR"/>
    <property type="match status" value="1"/>
</dbReference>
<dbReference type="PANTHER" id="PTHR12025:SF5">
    <property type="entry name" value="VASCULAR ENDOTHELIAL GROWTH FACTOR A, LONG FORM"/>
    <property type="match status" value="1"/>
</dbReference>
<dbReference type="Pfam" id="PF00341">
    <property type="entry name" value="PDGF"/>
    <property type="match status" value="1"/>
</dbReference>
<dbReference type="SMART" id="SM00141">
    <property type="entry name" value="PDGF"/>
    <property type="match status" value="1"/>
</dbReference>
<dbReference type="SUPFAM" id="SSF57501">
    <property type="entry name" value="Cystine-knot cytokines"/>
    <property type="match status" value="1"/>
</dbReference>
<dbReference type="PROSITE" id="PS00249">
    <property type="entry name" value="PDGF_1"/>
    <property type="match status" value="1"/>
</dbReference>
<dbReference type="PROSITE" id="PS50278">
    <property type="entry name" value="PDGF_2"/>
    <property type="match status" value="1"/>
</dbReference>
<protein>
    <recommendedName>
        <fullName>Vascular endothelial growth factor homolog</fullName>
    </recommendedName>
</protein>
<proteinExistence type="evidence at protein level"/>
<evidence type="ECO:0000250" key="1"/>
<evidence type="ECO:0000255" key="2"/>
<evidence type="ECO:0000305" key="3"/>
<evidence type="ECO:0007829" key="4">
    <source>
        <dbReference type="PDB" id="2GNN"/>
    </source>
</evidence>
<sequence>MKLLVGILVAVCLHQYLLNADSNTKGWSEVLKGSECKPRPIVVPVSETHPELTSQRFNPPCVTLMRCGGCCNDESLECVPTEEVNVSMELLGASGSGSNGMQRLSFVEHKKCDCRPRFTTTPPTTTRPPRRRR</sequence>
<reference key="1">
    <citation type="journal article" date="1994" name="J. Virol.">
        <title>Homologs of vascular endothelial growth factor are encoded by the poxvirus orf virus.</title>
        <authorList>
            <person name="Lyttle D.J."/>
            <person name="Fraser K.M."/>
            <person name="Fleming S.B."/>
            <person name="Mercer A.A."/>
            <person name="Robinson A.J."/>
        </authorList>
    </citation>
    <scope>NUCLEOTIDE SEQUENCE [GENOMIC DNA]</scope>
</reference>
<name>VEGFH_ORFN2</name>
<organismHost>
    <name type="scientific">Capra hircus</name>
    <name type="common">Goat</name>
    <dbReference type="NCBI Taxonomy" id="9925"/>
</organismHost>
<organismHost>
    <name type="scientific">Homo sapiens</name>
    <name type="common">Human</name>
    <dbReference type="NCBI Taxonomy" id="9606"/>
</organismHost>
<organismHost>
    <name type="scientific">Ovis aries</name>
    <name type="common">Sheep</name>
    <dbReference type="NCBI Taxonomy" id="9940"/>
</organismHost>
<keyword id="KW-0002">3D-structure</keyword>
<keyword id="KW-1015">Disulfide bond</keyword>
<keyword id="KW-0325">Glycoprotein</keyword>
<keyword id="KW-0339">Growth factor</keyword>
<keyword id="KW-0497">Mitogen</keyword>
<keyword id="KW-0964">Secreted</keyword>
<keyword id="KW-0732">Signal</keyword>